<proteinExistence type="inferred from homology"/>
<dbReference type="EMBL" id="CP001287">
    <property type="protein sequence ID" value="ACK67502.1"/>
    <property type="molecule type" value="Genomic_DNA"/>
</dbReference>
<dbReference type="RefSeq" id="WP_012596760.1">
    <property type="nucleotide sequence ID" value="NC_011726.1"/>
</dbReference>
<dbReference type="SMR" id="B7K1G0"/>
<dbReference type="STRING" id="41431.PCC8801_3537"/>
<dbReference type="KEGG" id="cyp:PCC8801_3537"/>
<dbReference type="eggNOG" id="COG1290">
    <property type="taxonomic scope" value="Bacteria"/>
</dbReference>
<dbReference type="HOGENOM" id="CLU_112652_0_0_3"/>
<dbReference type="OrthoDB" id="529454at2"/>
<dbReference type="Proteomes" id="UP000008204">
    <property type="component" value="Chromosome"/>
</dbReference>
<dbReference type="GO" id="GO:0031676">
    <property type="term" value="C:plasma membrane-derived thylakoid membrane"/>
    <property type="evidence" value="ECO:0007669"/>
    <property type="project" value="UniProtKB-SubCell"/>
</dbReference>
<dbReference type="GO" id="GO:0045158">
    <property type="term" value="F:electron transporter, transferring electrons within cytochrome b6/f complex of photosystem II activity"/>
    <property type="evidence" value="ECO:0007669"/>
    <property type="project" value="UniProtKB-UniRule"/>
</dbReference>
<dbReference type="GO" id="GO:0045156">
    <property type="term" value="F:electron transporter, transferring electrons within the cyclic electron transport pathway of photosynthesis activity"/>
    <property type="evidence" value="ECO:0007669"/>
    <property type="project" value="InterPro"/>
</dbReference>
<dbReference type="GO" id="GO:0016491">
    <property type="term" value="F:oxidoreductase activity"/>
    <property type="evidence" value="ECO:0007669"/>
    <property type="project" value="InterPro"/>
</dbReference>
<dbReference type="GO" id="GO:0009767">
    <property type="term" value="P:photosynthetic electron transport chain"/>
    <property type="evidence" value="ECO:0007669"/>
    <property type="project" value="InterPro"/>
</dbReference>
<dbReference type="CDD" id="cd00290">
    <property type="entry name" value="cytochrome_b_C"/>
    <property type="match status" value="1"/>
</dbReference>
<dbReference type="FunFam" id="1.10.287.980:FF:000001">
    <property type="entry name" value="Cytochrome b6-f complex subunit 4"/>
    <property type="match status" value="1"/>
</dbReference>
<dbReference type="FunFam" id="1.20.5.510:FF:000002">
    <property type="entry name" value="Cytochrome b6-f complex subunit 4"/>
    <property type="match status" value="1"/>
</dbReference>
<dbReference type="Gene3D" id="1.10.287.980">
    <property type="entry name" value="plastocyanin oxidoreductase"/>
    <property type="match status" value="1"/>
</dbReference>
<dbReference type="Gene3D" id="1.20.5.510">
    <property type="entry name" value="Single helix bin"/>
    <property type="match status" value="1"/>
</dbReference>
<dbReference type="HAMAP" id="MF_01344">
    <property type="entry name" value="Cytb6_f_subIV"/>
    <property type="match status" value="1"/>
</dbReference>
<dbReference type="InterPro" id="IPR005798">
    <property type="entry name" value="Cyt_b/b6_C"/>
</dbReference>
<dbReference type="InterPro" id="IPR036150">
    <property type="entry name" value="Cyt_b/b6_C_sf"/>
</dbReference>
<dbReference type="InterPro" id="IPR005870">
    <property type="entry name" value="Cyt_b6/f_cplx_suIV"/>
</dbReference>
<dbReference type="InterPro" id="IPR048260">
    <property type="entry name" value="Cytochrome_b_C_euk/bac"/>
</dbReference>
<dbReference type="NCBIfam" id="TIGR01156">
    <property type="entry name" value="cytb6_f_IV"/>
    <property type="match status" value="1"/>
</dbReference>
<dbReference type="PANTHER" id="PTHR19271">
    <property type="entry name" value="CYTOCHROME B"/>
    <property type="match status" value="1"/>
</dbReference>
<dbReference type="PANTHER" id="PTHR19271:SF40">
    <property type="entry name" value="CYTOCHROME B"/>
    <property type="match status" value="1"/>
</dbReference>
<dbReference type="Pfam" id="PF00032">
    <property type="entry name" value="Cytochrom_B_C"/>
    <property type="match status" value="1"/>
</dbReference>
<dbReference type="PIRSF" id="PIRSF000033">
    <property type="entry name" value="B6f_17K"/>
    <property type="match status" value="1"/>
</dbReference>
<dbReference type="SUPFAM" id="SSF81648">
    <property type="entry name" value="a domain/subunit of cytochrome bc1 complex (Ubiquinol-cytochrome c reductase)"/>
    <property type="match status" value="1"/>
</dbReference>
<dbReference type="PROSITE" id="PS51003">
    <property type="entry name" value="CYTB_CTER"/>
    <property type="match status" value="1"/>
</dbReference>
<gene>
    <name evidence="1" type="primary">petD</name>
    <name type="ordered locus">PCC8801_3537</name>
</gene>
<evidence type="ECO:0000255" key="1">
    <source>
        <dbReference type="HAMAP-Rule" id="MF_01344"/>
    </source>
</evidence>
<accession>B7K1G0</accession>
<comment type="function">
    <text evidence="1">Component of the cytochrome b6-f complex, which mediates electron transfer between photosystem II (PSII) and photosystem I (PSI), cyclic electron flow around PSI, and state transitions.</text>
</comment>
<comment type="subunit">
    <text evidence="1">The 4 large subunits of the cytochrome b6-f complex are cytochrome b6, subunit IV (17 kDa polypeptide, PetD), cytochrome f and the Rieske protein, while the 4 small subunits are PetG, PetL, PetM and PetN. The complex functions as a dimer.</text>
</comment>
<comment type="subcellular location">
    <subcellularLocation>
        <location evidence="1">Cellular thylakoid membrane</location>
        <topology evidence="1">Multi-pass membrane protein</topology>
    </subcellularLocation>
</comment>
<comment type="similarity">
    <text evidence="1">Belongs to the cytochrome b family. PetD subfamily.</text>
</comment>
<keyword id="KW-0249">Electron transport</keyword>
<keyword id="KW-0472">Membrane</keyword>
<keyword id="KW-0602">Photosynthesis</keyword>
<keyword id="KW-1185">Reference proteome</keyword>
<keyword id="KW-0793">Thylakoid</keyword>
<keyword id="KW-0812">Transmembrane</keyword>
<keyword id="KW-1133">Transmembrane helix</keyword>
<keyword id="KW-0813">Transport</keyword>
<reference key="1">
    <citation type="journal article" date="2011" name="MBio">
        <title>Novel metabolic attributes of the genus Cyanothece, comprising a group of unicellular nitrogen-fixing Cyanobacteria.</title>
        <authorList>
            <person name="Bandyopadhyay A."/>
            <person name="Elvitigala T."/>
            <person name="Welsh E."/>
            <person name="Stockel J."/>
            <person name="Liberton M."/>
            <person name="Min H."/>
            <person name="Sherman L.A."/>
            <person name="Pakrasi H.B."/>
        </authorList>
    </citation>
    <scope>NUCLEOTIDE SEQUENCE [LARGE SCALE GENOMIC DNA]</scope>
    <source>
        <strain>PCC 8801 / RF-1</strain>
    </source>
</reference>
<sequence>MSIQKKPDLSDPKLRAKLAQGMGHNYYGEPAWPNDLLYVFPVVILGTIGLVTALAVLDPALVGEPADPFATPLEILPEWYLYPVFQILRILPNKLLGIACQAAIPLGLMLVPFIESVNKFQNPFRRPVATAVFLFGTVVTLWLGAGATFPIDKSLTLGLF</sequence>
<organism>
    <name type="scientific">Rippkaea orientalis (strain PCC 8801 / RF-1)</name>
    <name type="common">Cyanothece sp. (strain PCC 8801)</name>
    <dbReference type="NCBI Taxonomy" id="41431"/>
    <lineage>
        <taxon>Bacteria</taxon>
        <taxon>Bacillati</taxon>
        <taxon>Cyanobacteriota</taxon>
        <taxon>Cyanophyceae</taxon>
        <taxon>Oscillatoriophycideae</taxon>
        <taxon>Chroococcales</taxon>
        <taxon>Aphanothecaceae</taxon>
        <taxon>Rippkaea</taxon>
        <taxon>Rippkaea orientalis</taxon>
    </lineage>
</organism>
<name>PETD_RIPO1</name>
<protein>
    <recommendedName>
        <fullName evidence="1">Cytochrome b6-f complex subunit 4</fullName>
    </recommendedName>
    <alternativeName>
        <fullName evidence="1">17 kDa polypeptide</fullName>
    </alternativeName>
</protein>
<feature type="chain" id="PRO_1000143202" description="Cytochrome b6-f complex subunit 4">
    <location>
        <begin position="1"/>
        <end position="160"/>
    </location>
</feature>
<feature type="transmembrane region" description="Helical" evidence="1">
    <location>
        <begin position="36"/>
        <end position="56"/>
    </location>
</feature>
<feature type="transmembrane region" description="Helical" evidence="1">
    <location>
        <begin position="95"/>
        <end position="115"/>
    </location>
</feature>
<feature type="transmembrane region" description="Helical" evidence="1">
    <location>
        <begin position="131"/>
        <end position="151"/>
    </location>
</feature>